<name>RL3_COLP3</name>
<feature type="chain" id="PRO_0000241335" description="Large ribosomal subunit protein uL3">
    <location>
        <begin position="1"/>
        <end position="212"/>
    </location>
</feature>
<feature type="modified residue" description="N5-methylglutamine" evidence="1">
    <location>
        <position position="153"/>
    </location>
</feature>
<dbReference type="EMBL" id="CP000083">
    <property type="protein sequence ID" value="AAZ24808.1"/>
    <property type="molecule type" value="Genomic_DNA"/>
</dbReference>
<dbReference type="RefSeq" id="WP_011041722.1">
    <property type="nucleotide sequence ID" value="NC_003910.7"/>
</dbReference>
<dbReference type="SMR" id="Q487Z3"/>
<dbReference type="STRING" id="167879.CPS_0873"/>
<dbReference type="KEGG" id="cps:CPS_0873"/>
<dbReference type="eggNOG" id="COG0087">
    <property type="taxonomic scope" value="Bacteria"/>
</dbReference>
<dbReference type="HOGENOM" id="CLU_044142_4_1_6"/>
<dbReference type="Proteomes" id="UP000000547">
    <property type="component" value="Chromosome"/>
</dbReference>
<dbReference type="GO" id="GO:0022625">
    <property type="term" value="C:cytosolic large ribosomal subunit"/>
    <property type="evidence" value="ECO:0007669"/>
    <property type="project" value="TreeGrafter"/>
</dbReference>
<dbReference type="GO" id="GO:0019843">
    <property type="term" value="F:rRNA binding"/>
    <property type="evidence" value="ECO:0007669"/>
    <property type="project" value="UniProtKB-UniRule"/>
</dbReference>
<dbReference type="GO" id="GO:0003735">
    <property type="term" value="F:structural constituent of ribosome"/>
    <property type="evidence" value="ECO:0007669"/>
    <property type="project" value="InterPro"/>
</dbReference>
<dbReference type="GO" id="GO:0006412">
    <property type="term" value="P:translation"/>
    <property type="evidence" value="ECO:0007669"/>
    <property type="project" value="UniProtKB-UniRule"/>
</dbReference>
<dbReference type="FunFam" id="2.40.30.10:FF:000004">
    <property type="entry name" value="50S ribosomal protein L3"/>
    <property type="match status" value="1"/>
</dbReference>
<dbReference type="FunFam" id="3.30.160.810:FF:000001">
    <property type="entry name" value="50S ribosomal protein L3"/>
    <property type="match status" value="1"/>
</dbReference>
<dbReference type="Gene3D" id="3.30.160.810">
    <property type="match status" value="1"/>
</dbReference>
<dbReference type="Gene3D" id="2.40.30.10">
    <property type="entry name" value="Translation factors"/>
    <property type="match status" value="1"/>
</dbReference>
<dbReference type="HAMAP" id="MF_01325_B">
    <property type="entry name" value="Ribosomal_uL3_B"/>
    <property type="match status" value="1"/>
</dbReference>
<dbReference type="InterPro" id="IPR000597">
    <property type="entry name" value="Ribosomal_uL3"/>
</dbReference>
<dbReference type="InterPro" id="IPR019927">
    <property type="entry name" value="Ribosomal_uL3_bac/org-type"/>
</dbReference>
<dbReference type="InterPro" id="IPR019926">
    <property type="entry name" value="Ribosomal_uL3_CS"/>
</dbReference>
<dbReference type="InterPro" id="IPR009000">
    <property type="entry name" value="Transl_B-barrel_sf"/>
</dbReference>
<dbReference type="NCBIfam" id="TIGR03625">
    <property type="entry name" value="L3_bact"/>
    <property type="match status" value="1"/>
</dbReference>
<dbReference type="PANTHER" id="PTHR11229">
    <property type="entry name" value="50S RIBOSOMAL PROTEIN L3"/>
    <property type="match status" value="1"/>
</dbReference>
<dbReference type="PANTHER" id="PTHR11229:SF16">
    <property type="entry name" value="LARGE RIBOSOMAL SUBUNIT PROTEIN UL3C"/>
    <property type="match status" value="1"/>
</dbReference>
<dbReference type="Pfam" id="PF00297">
    <property type="entry name" value="Ribosomal_L3"/>
    <property type="match status" value="1"/>
</dbReference>
<dbReference type="SUPFAM" id="SSF50447">
    <property type="entry name" value="Translation proteins"/>
    <property type="match status" value="1"/>
</dbReference>
<dbReference type="PROSITE" id="PS00474">
    <property type="entry name" value="RIBOSOMAL_L3"/>
    <property type="match status" value="1"/>
</dbReference>
<accession>Q487Z3</accession>
<organism>
    <name type="scientific">Colwellia psychrerythraea (strain 34H / ATCC BAA-681)</name>
    <name type="common">Vibrio psychroerythus</name>
    <dbReference type="NCBI Taxonomy" id="167879"/>
    <lineage>
        <taxon>Bacteria</taxon>
        <taxon>Pseudomonadati</taxon>
        <taxon>Pseudomonadota</taxon>
        <taxon>Gammaproteobacteria</taxon>
        <taxon>Alteromonadales</taxon>
        <taxon>Colwelliaceae</taxon>
        <taxon>Colwellia</taxon>
    </lineage>
</organism>
<protein>
    <recommendedName>
        <fullName evidence="1">Large ribosomal subunit protein uL3</fullName>
    </recommendedName>
    <alternativeName>
        <fullName evidence="2">50S ribosomal protein L3</fullName>
    </alternativeName>
</protein>
<proteinExistence type="inferred from homology"/>
<keyword id="KW-0488">Methylation</keyword>
<keyword id="KW-0687">Ribonucleoprotein</keyword>
<keyword id="KW-0689">Ribosomal protein</keyword>
<keyword id="KW-0694">RNA-binding</keyword>
<keyword id="KW-0699">rRNA-binding</keyword>
<evidence type="ECO:0000255" key="1">
    <source>
        <dbReference type="HAMAP-Rule" id="MF_01325"/>
    </source>
</evidence>
<evidence type="ECO:0000305" key="2"/>
<sequence>MTIGLVGRKVGMTRVFTEDGVSTPVTVIEVEANRVAQVKTVDNDGYSALQVTTGKRKASRVTKPAAGHFAKAGIEAGRGLWEFRLNENEGSDIEAGSEITVEVFNDTKLVDVTGTSKGKGFQGGIKRWNFTMQHATHGVSLSHRSNGSLGQCQTPGRVFKGKKMSGHMGAVRCTTQNLELVRVDAERNLLLIKGAVPGAINGNVIIKPAVKA</sequence>
<gene>
    <name evidence="1" type="primary">rplC</name>
    <name type="ordered locus">CPS_0873</name>
</gene>
<comment type="function">
    <text evidence="1">One of the primary rRNA binding proteins, it binds directly near the 3'-end of the 23S rRNA, where it nucleates assembly of the 50S subunit.</text>
</comment>
<comment type="subunit">
    <text evidence="1">Part of the 50S ribosomal subunit. Forms a cluster with proteins L14 and L19.</text>
</comment>
<comment type="PTM">
    <text evidence="1">Methylated by PrmB.</text>
</comment>
<comment type="similarity">
    <text evidence="1">Belongs to the universal ribosomal protein uL3 family.</text>
</comment>
<reference key="1">
    <citation type="journal article" date="2005" name="Proc. Natl. Acad. Sci. U.S.A.">
        <title>The psychrophilic lifestyle as revealed by the genome sequence of Colwellia psychrerythraea 34H through genomic and proteomic analyses.</title>
        <authorList>
            <person name="Methe B.A."/>
            <person name="Nelson K.E."/>
            <person name="Deming J.W."/>
            <person name="Momen B."/>
            <person name="Melamud E."/>
            <person name="Zhang X."/>
            <person name="Moult J."/>
            <person name="Madupu R."/>
            <person name="Nelson W.C."/>
            <person name="Dodson R.J."/>
            <person name="Brinkac L.M."/>
            <person name="Daugherty S.C."/>
            <person name="Durkin A.S."/>
            <person name="DeBoy R.T."/>
            <person name="Kolonay J.F."/>
            <person name="Sullivan S.A."/>
            <person name="Zhou L."/>
            <person name="Davidsen T.M."/>
            <person name="Wu M."/>
            <person name="Huston A.L."/>
            <person name="Lewis M."/>
            <person name="Weaver B."/>
            <person name="Weidman J.F."/>
            <person name="Khouri H."/>
            <person name="Utterback T.R."/>
            <person name="Feldblyum T.V."/>
            <person name="Fraser C.M."/>
        </authorList>
    </citation>
    <scope>NUCLEOTIDE SEQUENCE [LARGE SCALE GENOMIC DNA]</scope>
    <source>
        <strain>34H / ATCC BAA-681</strain>
    </source>
</reference>